<comment type="function">
    <text evidence="3">Component of the PeBoW complex, which is required for maturation of 28S and 5.8S ribosomal RNAs and formation of the 60S ribosome.</text>
</comment>
<comment type="subunit">
    <text evidence="3">Component of the PeBoW complex, composed of BOP1, PES1 and WDR12. The complex is held together by BOP1, which interacts with PES1 via its N-terminal domain and with WDR12 via a high-affinity interaction between the seven-bladed beta-propeller domains of the 2 proteins. The NOP7 complex associates with the 66S pre-ribosome. The PeBoW complex associates with DDX27, BOP1 interacts directly with DDX27.</text>
</comment>
<comment type="subcellular location">
    <subcellularLocation>
        <location evidence="3">Nucleus</location>
        <location evidence="3">Nucleolus</location>
    </subcellularLocation>
    <subcellularLocation>
        <location evidence="3">Nucleus</location>
        <location evidence="3">Nucleoplasm</location>
    </subcellularLocation>
</comment>
<comment type="similarity">
    <text evidence="3">Belongs to the WD repeat BOP1/ERB1 family.</text>
</comment>
<evidence type="ECO:0000250" key="1"/>
<evidence type="ECO:0000250" key="2">
    <source>
        <dbReference type="UniProtKB" id="Q14137"/>
    </source>
</evidence>
<evidence type="ECO:0000255" key="3">
    <source>
        <dbReference type="HAMAP-Rule" id="MF_03027"/>
    </source>
</evidence>
<evidence type="ECO:0000256" key="4">
    <source>
        <dbReference type="SAM" id="MobiDB-lite"/>
    </source>
</evidence>
<evidence type="ECO:0007744" key="5">
    <source>
    </source>
</evidence>
<protein>
    <recommendedName>
        <fullName evidence="3">Ribosome biogenesis protein BOP1</fullName>
    </recommendedName>
    <alternativeName>
        <fullName evidence="3">Block of proliferation 1 protein</fullName>
    </alternativeName>
</protein>
<organism>
    <name type="scientific">Rattus norvegicus</name>
    <name type="common">Rat</name>
    <dbReference type="NCBI Taxonomy" id="10116"/>
    <lineage>
        <taxon>Eukaryota</taxon>
        <taxon>Metazoa</taxon>
        <taxon>Chordata</taxon>
        <taxon>Craniata</taxon>
        <taxon>Vertebrata</taxon>
        <taxon>Euteleostomi</taxon>
        <taxon>Mammalia</taxon>
        <taxon>Eutheria</taxon>
        <taxon>Euarchontoglires</taxon>
        <taxon>Glires</taxon>
        <taxon>Rodentia</taxon>
        <taxon>Myomorpha</taxon>
        <taxon>Muroidea</taxon>
        <taxon>Muridae</taxon>
        <taxon>Murinae</taxon>
        <taxon>Rattus</taxon>
    </lineage>
</organism>
<reference key="1">
    <citation type="journal article" date="2004" name="Genome Res.">
        <title>The status, quality, and expansion of the NIH full-length cDNA project: the Mammalian Gene Collection (MGC).</title>
        <authorList>
            <consortium name="The MGC Project Team"/>
        </authorList>
    </citation>
    <scope>NUCLEOTIDE SEQUENCE [LARGE SCALE MRNA]</scope>
    <source>
        <tissue>Thymus</tissue>
    </source>
</reference>
<reference key="2">
    <citation type="journal article" date="2012" name="Nat. Commun.">
        <title>Quantitative maps of protein phosphorylation sites across 14 different rat organs and tissues.</title>
        <authorList>
            <person name="Lundby A."/>
            <person name="Secher A."/>
            <person name="Lage K."/>
            <person name="Nordsborg N.B."/>
            <person name="Dmytriyev A."/>
            <person name="Lundby C."/>
            <person name="Olsen J.V."/>
        </authorList>
    </citation>
    <scope>PHOSPHORYLATION [LARGE SCALE ANALYSIS] AT SER-111 AND SER-112</scope>
    <scope>IDENTIFICATION BY MASS SPECTROMETRY [LARGE SCALE ANALYSIS]</scope>
</reference>
<gene>
    <name type="primary">Bop1</name>
</gene>
<proteinExistence type="evidence at protein level"/>
<feature type="chain" id="PRO_0000370386" description="Ribosome biogenesis protein BOP1">
    <location>
        <begin position="1"/>
        <end position="731"/>
    </location>
</feature>
<feature type="repeat" description="WD 1">
    <location>
        <begin position="396"/>
        <end position="435"/>
    </location>
</feature>
<feature type="repeat" description="WD 2">
    <location>
        <begin position="437"/>
        <end position="477"/>
    </location>
</feature>
<feature type="repeat" description="WD 3">
    <location>
        <begin position="517"/>
        <end position="559"/>
    </location>
</feature>
<feature type="repeat" description="WD 4">
    <location>
        <begin position="562"/>
        <end position="600"/>
    </location>
</feature>
<feature type="repeat" description="WD 5">
    <location>
        <begin position="603"/>
        <end position="642"/>
    </location>
</feature>
<feature type="repeat" description="WD 6">
    <location>
        <begin position="646"/>
        <end position="685"/>
    </location>
</feature>
<feature type="repeat" description="WD 7">
    <location>
        <begin position="701"/>
        <end position="731"/>
    </location>
</feature>
<feature type="region of interest" description="Disordered" evidence="4">
    <location>
        <begin position="1"/>
        <end position="116"/>
    </location>
</feature>
<feature type="region of interest" description="Sufficient for nucleolar localization" evidence="1">
    <location>
        <begin position="250"/>
        <end position="412"/>
    </location>
</feature>
<feature type="compositionally biased region" description="Basic residues" evidence="4">
    <location>
        <begin position="1"/>
        <end position="10"/>
    </location>
</feature>
<feature type="compositionally biased region" description="Low complexity" evidence="4">
    <location>
        <begin position="31"/>
        <end position="43"/>
    </location>
</feature>
<feature type="compositionally biased region" description="Acidic residues" evidence="4">
    <location>
        <begin position="56"/>
        <end position="66"/>
    </location>
</feature>
<feature type="compositionally biased region" description="Basic and acidic residues" evidence="4">
    <location>
        <begin position="67"/>
        <end position="84"/>
    </location>
</feature>
<feature type="compositionally biased region" description="Acidic residues" evidence="4">
    <location>
        <begin position="106"/>
        <end position="116"/>
    </location>
</feature>
<feature type="modified residue" description="Phosphotyrosine" evidence="2">
    <location>
        <position position="107"/>
    </location>
</feature>
<feature type="modified residue" description="Phosphoserine" evidence="5">
    <location>
        <position position="111"/>
    </location>
</feature>
<feature type="modified residue" description="Phosphoserine" evidence="5">
    <location>
        <position position="112"/>
    </location>
</feature>
<keyword id="KW-0539">Nucleus</keyword>
<keyword id="KW-0597">Phosphoprotein</keyword>
<keyword id="KW-1185">Reference proteome</keyword>
<keyword id="KW-0677">Repeat</keyword>
<keyword id="KW-0690">Ribosome biogenesis</keyword>
<keyword id="KW-0698">rRNA processing</keyword>
<keyword id="KW-0853">WD repeat</keyword>
<sequence length="731" mass="82640">MAGACGKHHMSPGSLPGKRRLEPDQEPQIQEPLLLSDPDSSLSDSEESVFSGLEDSGSDTSDEDTEEVARAGCDKDNRTEKTSEEQEQAVPPCPRAEEAGALTRDEYEEDSSDEEDIRNTVGNVPLAWYDDFPHVGYDLDGKRIYKPLRTRDELDQFLDKMDDPDFWRTVQDKMTGSDLRLTDEQVALVHRLQRGQFGDSGFDPYEPAVDFFSGDIMIHPVTNRPADKRSFIPSLVEKEKVSRLVHAIKMGWIKPRRPPDSTPSFYDLWAQEDPNAVLGRHKMHVPAPKLALPGHAESYNPPPEYLPTEEERLAWMQQEPIERKLNFLPQKFPSLRTVPAYGRFIQERFERCLDLYLCPRQRKMRVNVDPEDLIPKLPRPRDLQPFPVCQALVYRGHSDLVRCLSVSPGGQWLASGSDDGTLRLWEVATARCMKTVRVGGVIRSIAWNPNPTICLVAAAMDDAVVLLNPALGDRLLVGSTDQLLETFTPPEEPTLQPAHWLEVSEEERQRGLRLRICHSKPVTQVTWHGRGDYLAVVLSSQGHTQVLIHQLSRRRSQSPFRRSHGQVQCVAFHPTRPFLLVASQRSIRIYHLLRQELTKKLMPNCKWVSSMAVHPAGDNIICGSYDSKLVWFDLDLSTKPYKVLRHHKKALRAVAFHPRYPLFASGSDDGSVIVCHGMVYNDLLQNPLLVPVKVLKGHSLTRDLGVLDVAFHPTQPWVFSSGADGTIRLFS</sequence>
<accession>Q562C2</accession>
<name>BOP1_RAT</name>
<dbReference type="EMBL" id="BC092594">
    <property type="protein sequence ID" value="AAH92594.1"/>
    <property type="molecule type" value="mRNA"/>
</dbReference>
<dbReference type="RefSeq" id="NP_001019421.1">
    <property type="nucleotide sequence ID" value="NM_001024250.1"/>
</dbReference>
<dbReference type="SMR" id="Q562C2"/>
<dbReference type="FunCoup" id="Q562C2">
    <property type="interactions" value="2628"/>
</dbReference>
<dbReference type="STRING" id="10116.ENSRNOP00000025133"/>
<dbReference type="GlyGen" id="Q562C2">
    <property type="glycosylation" value="1 site"/>
</dbReference>
<dbReference type="iPTMnet" id="Q562C2"/>
<dbReference type="PhosphoSitePlus" id="Q562C2"/>
<dbReference type="jPOST" id="Q562C2"/>
<dbReference type="PaxDb" id="10116-ENSRNOP00000025133"/>
<dbReference type="Ensembl" id="ENSRNOT00000025134.6">
    <property type="protein sequence ID" value="ENSRNOP00000025133.5"/>
    <property type="gene ID" value="ENSRNOG00000021773.6"/>
</dbReference>
<dbReference type="GeneID" id="300050"/>
<dbReference type="KEGG" id="rno:300050"/>
<dbReference type="UCSC" id="RGD:1310589">
    <property type="organism name" value="rat"/>
</dbReference>
<dbReference type="AGR" id="RGD:1310589"/>
<dbReference type="CTD" id="23246"/>
<dbReference type="RGD" id="1310589">
    <property type="gene designation" value="Bop1"/>
</dbReference>
<dbReference type="eggNOG" id="KOG0650">
    <property type="taxonomic scope" value="Eukaryota"/>
</dbReference>
<dbReference type="GeneTree" id="ENSGT00390000018422"/>
<dbReference type="HOGENOM" id="CLU_011390_0_1_1"/>
<dbReference type="InParanoid" id="Q562C2"/>
<dbReference type="OMA" id="MRPAKGE"/>
<dbReference type="OrthoDB" id="5571054at2759"/>
<dbReference type="PhylomeDB" id="Q562C2"/>
<dbReference type="TreeFam" id="TF300437"/>
<dbReference type="Reactome" id="R-RNO-6791226">
    <property type="pathway name" value="Major pathway of rRNA processing in the nucleolus and cytosol"/>
</dbReference>
<dbReference type="PRO" id="PR:Q562C2"/>
<dbReference type="Proteomes" id="UP000002494">
    <property type="component" value="Chromosome 7"/>
</dbReference>
<dbReference type="Bgee" id="ENSRNOG00000021773">
    <property type="expression patterns" value="Expressed in pancreas and 20 other cell types or tissues"/>
</dbReference>
<dbReference type="GO" id="GO:0005694">
    <property type="term" value="C:chromosome"/>
    <property type="evidence" value="ECO:0007669"/>
    <property type="project" value="Ensembl"/>
</dbReference>
<dbReference type="GO" id="GO:0005730">
    <property type="term" value="C:nucleolus"/>
    <property type="evidence" value="ECO:0000266"/>
    <property type="project" value="RGD"/>
</dbReference>
<dbReference type="GO" id="GO:0005654">
    <property type="term" value="C:nucleoplasm"/>
    <property type="evidence" value="ECO:0007669"/>
    <property type="project" value="UniProtKB-SubCell"/>
</dbReference>
<dbReference type="GO" id="GO:0070545">
    <property type="term" value="C:PeBoW complex"/>
    <property type="evidence" value="ECO:0000250"/>
    <property type="project" value="UniProtKB"/>
</dbReference>
<dbReference type="GO" id="GO:0030687">
    <property type="term" value="C:preribosome, large subunit precursor"/>
    <property type="evidence" value="ECO:0000318"/>
    <property type="project" value="GO_Central"/>
</dbReference>
<dbReference type="GO" id="GO:1990904">
    <property type="term" value="C:ribonucleoprotein complex"/>
    <property type="evidence" value="ECO:0000266"/>
    <property type="project" value="RGD"/>
</dbReference>
<dbReference type="GO" id="GO:0043021">
    <property type="term" value="F:ribonucleoprotein complex binding"/>
    <property type="evidence" value="ECO:0000266"/>
    <property type="project" value="RGD"/>
</dbReference>
<dbReference type="GO" id="GO:0008283">
    <property type="term" value="P:cell population proliferation"/>
    <property type="evidence" value="ECO:0000266"/>
    <property type="project" value="RGD"/>
</dbReference>
<dbReference type="GO" id="GO:0000448">
    <property type="term" value="P:cleavage in ITS2 between 5.8S rRNA and LSU-rRNA of tricistronic rRNA transcript (SSU-rRNA, 5.8S rRNA, LSU-rRNA)"/>
    <property type="evidence" value="ECO:0000266"/>
    <property type="project" value="RGD"/>
</dbReference>
<dbReference type="GO" id="GO:0000460">
    <property type="term" value="P:maturation of 5.8S rRNA"/>
    <property type="evidence" value="ECO:0000266"/>
    <property type="project" value="RGD"/>
</dbReference>
<dbReference type="GO" id="GO:0000463">
    <property type="term" value="P:maturation of LSU-rRNA from tricistronic rRNA transcript (SSU-rRNA, 5.8S rRNA, LSU-rRNA)"/>
    <property type="evidence" value="ECO:0000250"/>
    <property type="project" value="UniProtKB"/>
</dbReference>
<dbReference type="GO" id="GO:0051726">
    <property type="term" value="P:regulation of cell cycle"/>
    <property type="evidence" value="ECO:0000250"/>
    <property type="project" value="UniProtKB"/>
</dbReference>
<dbReference type="GO" id="GO:1901796">
    <property type="term" value="P:regulation of signal transduction by p53 class mediator"/>
    <property type="evidence" value="ECO:0000266"/>
    <property type="project" value="RGD"/>
</dbReference>
<dbReference type="GO" id="GO:0000027">
    <property type="term" value="P:ribosomal large subunit assembly"/>
    <property type="evidence" value="ECO:0000266"/>
    <property type="project" value="RGD"/>
</dbReference>
<dbReference type="GO" id="GO:0042273">
    <property type="term" value="P:ribosomal large subunit biogenesis"/>
    <property type="evidence" value="ECO:0000266"/>
    <property type="project" value="RGD"/>
</dbReference>
<dbReference type="GO" id="GO:0006364">
    <property type="term" value="P:rRNA processing"/>
    <property type="evidence" value="ECO:0000266"/>
    <property type="project" value="RGD"/>
</dbReference>
<dbReference type="CDD" id="cd00200">
    <property type="entry name" value="WD40"/>
    <property type="match status" value="1"/>
</dbReference>
<dbReference type="FunFam" id="2.130.10.10:FF:000061">
    <property type="entry name" value="Ribosome biogenesis protein BOP1 homolog"/>
    <property type="match status" value="1"/>
</dbReference>
<dbReference type="Gene3D" id="2.130.10.10">
    <property type="entry name" value="YVTN repeat-like/Quinoprotein amine dehydrogenase"/>
    <property type="match status" value="1"/>
</dbReference>
<dbReference type="HAMAP" id="MF_03027">
    <property type="entry name" value="BOP1"/>
    <property type="match status" value="1"/>
</dbReference>
<dbReference type="InterPro" id="IPR028598">
    <property type="entry name" value="BOP1/Erb1"/>
</dbReference>
<dbReference type="InterPro" id="IPR012953">
    <property type="entry name" value="BOP1_N_dom"/>
</dbReference>
<dbReference type="InterPro" id="IPR015943">
    <property type="entry name" value="WD40/YVTN_repeat-like_dom_sf"/>
</dbReference>
<dbReference type="InterPro" id="IPR019775">
    <property type="entry name" value="WD40_repeat_CS"/>
</dbReference>
<dbReference type="InterPro" id="IPR036322">
    <property type="entry name" value="WD40_repeat_dom_sf"/>
</dbReference>
<dbReference type="InterPro" id="IPR001680">
    <property type="entry name" value="WD40_rpt"/>
</dbReference>
<dbReference type="PANTHER" id="PTHR17605:SF0">
    <property type="entry name" value="RIBOSOME BIOGENESIS PROTEIN BOP1"/>
    <property type="match status" value="1"/>
</dbReference>
<dbReference type="PANTHER" id="PTHR17605">
    <property type="entry name" value="RIBOSOME BIOGENESIS PROTEIN BOP1 BLOCK OF PROLIFERATION 1 PROTEIN"/>
    <property type="match status" value="1"/>
</dbReference>
<dbReference type="Pfam" id="PF08145">
    <property type="entry name" value="BOP1NT"/>
    <property type="match status" value="1"/>
</dbReference>
<dbReference type="Pfam" id="PF00400">
    <property type="entry name" value="WD40"/>
    <property type="match status" value="5"/>
</dbReference>
<dbReference type="SMART" id="SM01035">
    <property type="entry name" value="BOP1NT"/>
    <property type="match status" value="1"/>
</dbReference>
<dbReference type="SMART" id="SM00320">
    <property type="entry name" value="WD40"/>
    <property type="match status" value="7"/>
</dbReference>
<dbReference type="SUPFAM" id="SSF50978">
    <property type="entry name" value="WD40 repeat-like"/>
    <property type="match status" value="1"/>
</dbReference>
<dbReference type="PROSITE" id="PS00678">
    <property type="entry name" value="WD_REPEATS_1"/>
    <property type="match status" value="1"/>
</dbReference>
<dbReference type="PROSITE" id="PS50082">
    <property type="entry name" value="WD_REPEATS_2"/>
    <property type="match status" value="3"/>
</dbReference>
<dbReference type="PROSITE" id="PS50294">
    <property type="entry name" value="WD_REPEATS_REGION"/>
    <property type="match status" value="1"/>
</dbReference>